<gene>
    <name evidence="1" type="primary">atpB</name>
</gene>
<organism>
    <name type="scientific">Dennstaedtia punctilobula</name>
    <name type="common">Hay-scented fern</name>
    <name type="synonym">Nephrodium punctilobum</name>
    <dbReference type="NCBI Taxonomy" id="32088"/>
    <lineage>
        <taxon>Eukaryota</taxon>
        <taxon>Viridiplantae</taxon>
        <taxon>Streptophyta</taxon>
        <taxon>Embryophyta</taxon>
        <taxon>Tracheophyta</taxon>
        <taxon>Polypodiopsida</taxon>
        <taxon>Polypodiidae</taxon>
        <taxon>Polypodiales</taxon>
        <taxon>Dennstaedtiineae</taxon>
        <taxon>Dennstaedtiaceae</taxon>
        <taxon>Dennstaedtia</taxon>
    </lineage>
</organism>
<comment type="function">
    <text evidence="1">Produces ATP from ADP in the presence of a proton gradient across the membrane. The catalytic sites are hosted primarily by the beta subunits.</text>
</comment>
<comment type="catalytic activity">
    <reaction evidence="1">
        <text>ATP + H2O + 4 H(+)(in) = ADP + phosphate + 5 H(+)(out)</text>
        <dbReference type="Rhea" id="RHEA:57720"/>
        <dbReference type="ChEBI" id="CHEBI:15377"/>
        <dbReference type="ChEBI" id="CHEBI:15378"/>
        <dbReference type="ChEBI" id="CHEBI:30616"/>
        <dbReference type="ChEBI" id="CHEBI:43474"/>
        <dbReference type="ChEBI" id="CHEBI:456216"/>
        <dbReference type="EC" id="7.1.2.2"/>
    </reaction>
</comment>
<comment type="subunit">
    <text evidence="1">F-type ATPases have 2 components, CF(1) - the catalytic core - and CF(0) - the membrane proton channel. CF(1) has five subunits: alpha(3), beta(3), gamma(1), delta(1), epsilon(1). CF(0) has four main subunits: a(1), b(1), b'(1) and c(9-12).</text>
</comment>
<comment type="subcellular location">
    <subcellularLocation>
        <location evidence="1">Plastid</location>
        <location evidence="1">Chloroplast thylakoid membrane</location>
        <topology evidence="1">Peripheral membrane protein</topology>
    </subcellularLocation>
</comment>
<comment type="similarity">
    <text evidence="1">Belongs to the ATPase alpha/beta chains family.</text>
</comment>
<protein>
    <recommendedName>
        <fullName evidence="1">ATP synthase subunit beta, chloroplastic</fullName>
        <ecNumber evidence="1">7.1.2.2</ecNumber>
    </recommendedName>
    <alternativeName>
        <fullName evidence="1">ATP synthase F1 sector subunit beta</fullName>
    </alternativeName>
    <alternativeName>
        <fullName evidence="1">F-ATPase subunit beta</fullName>
    </alternativeName>
</protein>
<name>ATPB_DENPU</name>
<dbReference type="EC" id="7.1.2.2" evidence="1"/>
<dbReference type="EMBL" id="U93836">
    <property type="protein sequence ID" value="AAB51744.2"/>
    <property type="molecule type" value="Genomic_DNA"/>
</dbReference>
<dbReference type="SMR" id="O03068"/>
<dbReference type="GO" id="GO:0009535">
    <property type="term" value="C:chloroplast thylakoid membrane"/>
    <property type="evidence" value="ECO:0007669"/>
    <property type="project" value="UniProtKB-SubCell"/>
</dbReference>
<dbReference type="GO" id="GO:0005739">
    <property type="term" value="C:mitochondrion"/>
    <property type="evidence" value="ECO:0007669"/>
    <property type="project" value="GOC"/>
</dbReference>
<dbReference type="GO" id="GO:0045259">
    <property type="term" value="C:proton-transporting ATP synthase complex"/>
    <property type="evidence" value="ECO:0007669"/>
    <property type="project" value="UniProtKB-KW"/>
</dbReference>
<dbReference type="GO" id="GO:0005524">
    <property type="term" value="F:ATP binding"/>
    <property type="evidence" value="ECO:0007669"/>
    <property type="project" value="UniProtKB-KW"/>
</dbReference>
<dbReference type="GO" id="GO:0016887">
    <property type="term" value="F:ATP hydrolysis activity"/>
    <property type="evidence" value="ECO:0007669"/>
    <property type="project" value="InterPro"/>
</dbReference>
<dbReference type="GO" id="GO:0046933">
    <property type="term" value="F:proton-transporting ATP synthase activity, rotational mechanism"/>
    <property type="evidence" value="ECO:0007669"/>
    <property type="project" value="InterPro"/>
</dbReference>
<dbReference type="GO" id="GO:0042776">
    <property type="term" value="P:proton motive force-driven mitochondrial ATP synthesis"/>
    <property type="evidence" value="ECO:0007669"/>
    <property type="project" value="TreeGrafter"/>
</dbReference>
<dbReference type="CDD" id="cd18110">
    <property type="entry name" value="ATP-synt_F1_beta_C"/>
    <property type="match status" value="1"/>
</dbReference>
<dbReference type="CDD" id="cd18115">
    <property type="entry name" value="ATP-synt_F1_beta_N"/>
    <property type="match status" value="1"/>
</dbReference>
<dbReference type="CDD" id="cd01133">
    <property type="entry name" value="F1-ATPase_beta_CD"/>
    <property type="match status" value="1"/>
</dbReference>
<dbReference type="FunFam" id="1.10.1140.10:FF:000001">
    <property type="entry name" value="ATP synthase subunit beta"/>
    <property type="match status" value="1"/>
</dbReference>
<dbReference type="FunFam" id="3.40.50.300:FF:000004">
    <property type="entry name" value="ATP synthase subunit beta"/>
    <property type="match status" value="1"/>
</dbReference>
<dbReference type="FunFam" id="2.40.10.170:FF:000002">
    <property type="entry name" value="ATP synthase subunit beta, chloroplastic"/>
    <property type="match status" value="1"/>
</dbReference>
<dbReference type="Gene3D" id="2.40.10.170">
    <property type="match status" value="1"/>
</dbReference>
<dbReference type="Gene3D" id="1.10.1140.10">
    <property type="entry name" value="Bovine Mitochondrial F1-atpase, Atp Synthase Beta Chain, Chain D, domain 3"/>
    <property type="match status" value="1"/>
</dbReference>
<dbReference type="Gene3D" id="3.40.50.300">
    <property type="entry name" value="P-loop containing nucleotide triphosphate hydrolases"/>
    <property type="match status" value="1"/>
</dbReference>
<dbReference type="HAMAP" id="MF_01347">
    <property type="entry name" value="ATP_synth_beta_bact"/>
    <property type="match status" value="1"/>
</dbReference>
<dbReference type="InterPro" id="IPR003593">
    <property type="entry name" value="AAA+_ATPase"/>
</dbReference>
<dbReference type="InterPro" id="IPR055190">
    <property type="entry name" value="ATP-synt_VA_C"/>
</dbReference>
<dbReference type="InterPro" id="IPR005722">
    <property type="entry name" value="ATP_synth_F1_bsu"/>
</dbReference>
<dbReference type="InterPro" id="IPR020003">
    <property type="entry name" value="ATPase_a/bsu_AS"/>
</dbReference>
<dbReference type="InterPro" id="IPR050053">
    <property type="entry name" value="ATPase_alpha/beta_chains"/>
</dbReference>
<dbReference type="InterPro" id="IPR004100">
    <property type="entry name" value="ATPase_F1/V1/A1_a/bsu_N"/>
</dbReference>
<dbReference type="InterPro" id="IPR036121">
    <property type="entry name" value="ATPase_F1/V1/A1_a/bsu_N_sf"/>
</dbReference>
<dbReference type="InterPro" id="IPR000194">
    <property type="entry name" value="ATPase_F1/V1/A1_a/bsu_nucl-bd"/>
</dbReference>
<dbReference type="InterPro" id="IPR024034">
    <property type="entry name" value="ATPase_F1/V1_b/a_C"/>
</dbReference>
<dbReference type="InterPro" id="IPR027417">
    <property type="entry name" value="P-loop_NTPase"/>
</dbReference>
<dbReference type="NCBIfam" id="TIGR01039">
    <property type="entry name" value="atpD"/>
    <property type="match status" value="1"/>
</dbReference>
<dbReference type="PANTHER" id="PTHR15184">
    <property type="entry name" value="ATP SYNTHASE"/>
    <property type="match status" value="1"/>
</dbReference>
<dbReference type="PANTHER" id="PTHR15184:SF71">
    <property type="entry name" value="ATP SYNTHASE SUBUNIT BETA, MITOCHONDRIAL"/>
    <property type="match status" value="1"/>
</dbReference>
<dbReference type="Pfam" id="PF00006">
    <property type="entry name" value="ATP-synt_ab"/>
    <property type="match status" value="1"/>
</dbReference>
<dbReference type="Pfam" id="PF02874">
    <property type="entry name" value="ATP-synt_ab_N"/>
    <property type="match status" value="1"/>
</dbReference>
<dbReference type="Pfam" id="PF22919">
    <property type="entry name" value="ATP-synt_VA_C"/>
    <property type="match status" value="1"/>
</dbReference>
<dbReference type="SMART" id="SM00382">
    <property type="entry name" value="AAA"/>
    <property type="match status" value="1"/>
</dbReference>
<dbReference type="SUPFAM" id="SSF47917">
    <property type="entry name" value="C-terminal domain of alpha and beta subunits of F1 ATP synthase"/>
    <property type="match status" value="1"/>
</dbReference>
<dbReference type="SUPFAM" id="SSF50615">
    <property type="entry name" value="N-terminal domain of alpha and beta subunits of F1 ATP synthase"/>
    <property type="match status" value="1"/>
</dbReference>
<dbReference type="SUPFAM" id="SSF52540">
    <property type="entry name" value="P-loop containing nucleoside triphosphate hydrolases"/>
    <property type="match status" value="1"/>
</dbReference>
<dbReference type="PROSITE" id="PS00152">
    <property type="entry name" value="ATPASE_ALPHA_BETA"/>
    <property type="match status" value="1"/>
</dbReference>
<accession>O03068</accession>
<sequence length="486" mass="51878">NVGYITQIIGPVLDVAFSPGEMPNIYNSLVVKGQNPAGQDINVTCEVQQLLGNNEVRAVATSATDGLMRGMGAVDTGAPLSVPVGETTLGRISNVLGEPVDNPGPVQSNTTFPIHRSAPAFTQLDTKLSTFETGIKVVDLLAPYRRGGKIGLFGGAGVGKTVPITELINNIAKAHGGVSVSGGVGERTREGNDLYMEMKESKVINEQNISESKVALVYGQMNEPPGARMRVGSTASTMAEYFRDVNKQDVPLFIDNILRFVQAGSEVSALLGRMPSAVGYQPTLGTEMGSLQERITSTKEGSITSIQAVYVPADDLTDPAPATTSAHLDATTVLSRGLAAKGIYPAVDPLDSTSTMSQPWIVGEEHYETAQGVKQTSQRYKELQDIIAILGLDELSEEDRLTVARARKIERFSSQPFLVAEVFTGSPGKYVSLPETIKGFQMILPGELDNLPEQASYLAGNVDEATAKAAALQVEGQRKGWYRIFA</sequence>
<geneLocation type="chloroplast"/>
<evidence type="ECO:0000255" key="1">
    <source>
        <dbReference type="HAMAP-Rule" id="MF_01347"/>
    </source>
</evidence>
<reference key="1">
    <citation type="submission" date="2000-01" db="EMBL/GenBank/DDBJ databases">
        <authorList>
            <person name="Wolf P.G."/>
            <person name="Su P.-H."/>
        </authorList>
    </citation>
    <scope>NUCLEOTIDE SEQUENCE [GENOMIC DNA]</scope>
    <scope>SEQUENCE REVISION</scope>
</reference>
<reference key="2">
    <citation type="journal article" date="1997" name="Am. J. Bot.">
        <title>Evaluation of atpB nucleotide sequences for phylogenetic studies of ferns and other pteridophytes.</title>
        <authorList>
            <person name="Wolf P.G."/>
        </authorList>
    </citation>
    <scope>NUCLEOTIDE SEQUENCE [GENOMIC DNA] OF 240-454</scope>
    <source>
        <tissue>Frond</tissue>
    </source>
</reference>
<feature type="chain" id="PRO_0000144509" description="ATP synthase subunit beta, chloroplastic">
    <location>
        <begin position="1" status="less than"/>
        <end position="486"/>
    </location>
</feature>
<feature type="binding site" evidence="1">
    <location>
        <begin position="154"/>
        <end position="161"/>
    </location>
    <ligand>
        <name>ATP</name>
        <dbReference type="ChEBI" id="CHEBI:30616"/>
    </ligand>
</feature>
<feature type="non-terminal residue">
    <location>
        <position position="1"/>
    </location>
</feature>
<proteinExistence type="inferred from homology"/>
<keyword id="KW-0066">ATP synthesis</keyword>
<keyword id="KW-0067">ATP-binding</keyword>
<keyword id="KW-0139">CF(1)</keyword>
<keyword id="KW-0150">Chloroplast</keyword>
<keyword id="KW-0375">Hydrogen ion transport</keyword>
<keyword id="KW-0406">Ion transport</keyword>
<keyword id="KW-0472">Membrane</keyword>
<keyword id="KW-0547">Nucleotide-binding</keyword>
<keyword id="KW-0934">Plastid</keyword>
<keyword id="KW-0793">Thylakoid</keyword>
<keyword id="KW-1278">Translocase</keyword>
<keyword id="KW-0813">Transport</keyword>